<dbReference type="EMBL" id="CP000854">
    <property type="protein sequence ID" value="ACC42493.1"/>
    <property type="molecule type" value="Genomic_DNA"/>
</dbReference>
<dbReference type="RefSeq" id="WP_012395670.1">
    <property type="nucleotide sequence ID" value="NC_010612.1"/>
</dbReference>
<dbReference type="SMR" id="B2HQK1"/>
<dbReference type="STRING" id="216594.MMAR_4086"/>
<dbReference type="GeneID" id="34341449"/>
<dbReference type="KEGG" id="mmi:MMAR_4086"/>
<dbReference type="eggNOG" id="COG0355">
    <property type="taxonomic scope" value="Bacteria"/>
</dbReference>
<dbReference type="HOGENOM" id="CLU_084338_4_0_11"/>
<dbReference type="OrthoDB" id="9791445at2"/>
<dbReference type="Proteomes" id="UP000001190">
    <property type="component" value="Chromosome"/>
</dbReference>
<dbReference type="GO" id="GO:0005886">
    <property type="term" value="C:plasma membrane"/>
    <property type="evidence" value="ECO:0007669"/>
    <property type="project" value="UniProtKB-SubCell"/>
</dbReference>
<dbReference type="GO" id="GO:0045259">
    <property type="term" value="C:proton-transporting ATP synthase complex"/>
    <property type="evidence" value="ECO:0007669"/>
    <property type="project" value="UniProtKB-KW"/>
</dbReference>
<dbReference type="GO" id="GO:0005524">
    <property type="term" value="F:ATP binding"/>
    <property type="evidence" value="ECO:0007669"/>
    <property type="project" value="UniProtKB-UniRule"/>
</dbReference>
<dbReference type="GO" id="GO:0046933">
    <property type="term" value="F:proton-transporting ATP synthase activity, rotational mechanism"/>
    <property type="evidence" value="ECO:0007669"/>
    <property type="project" value="UniProtKB-UniRule"/>
</dbReference>
<dbReference type="CDD" id="cd12152">
    <property type="entry name" value="F1-ATPase_delta"/>
    <property type="match status" value="1"/>
</dbReference>
<dbReference type="Gene3D" id="2.60.15.10">
    <property type="entry name" value="F0F1 ATP synthase delta/epsilon subunit, N-terminal"/>
    <property type="match status" value="1"/>
</dbReference>
<dbReference type="HAMAP" id="MF_00530">
    <property type="entry name" value="ATP_synth_epsil_bac"/>
    <property type="match status" value="1"/>
</dbReference>
<dbReference type="InterPro" id="IPR001469">
    <property type="entry name" value="ATP_synth_F1_dsu/esu"/>
</dbReference>
<dbReference type="InterPro" id="IPR020546">
    <property type="entry name" value="ATP_synth_F1_dsu/esu_N"/>
</dbReference>
<dbReference type="InterPro" id="IPR036771">
    <property type="entry name" value="ATPsynth_dsu/esu_N"/>
</dbReference>
<dbReference type="NCBIfam" id="TIGR01216">
    <property type="entry name" value="ATP_synt_epsi"/>
    <property type="match status" value="1"/>
</dbReference>
<dbReference type="NCBIfam" id="NF009977">
    <property type="entry name" value="PRK13442.1"/>
    <property type="match status" value="1"/>
</dbReference>
<dbReference type="PANTHER" id="PTHR13822">
    <property type="entry name" value="ATP SYNTHASE DELTA/EPSILON CHAIN"/>
    <property type="match status" value="1"/>
</dbReference>
<dbReference type="PANTHER" id="PTHR13822:SF10">
    <property type="entry name" value="ATP SYNTHASE EPSILON CHAIN, CHLOROPLASTIC"/>
    <property type="match status" value="1"/>
</dbReference>
<dbReference type="Pfam" id="PF02823">
    <property type="entry name" value="ATP-synt_DE_N"/>
    <property type="match status" value="1"/>
</dbReference>
<dbReference type="SUPFAM" id="SSF51344">
    <property type="entry name" value="Epsilon subunit of F1F0-ATP synthase N-terminal domain"/>
    <property type="match status" value="1"/>
</dbReference>
<keyword id="KW-0066">ATP synthesis</keyword>
<keyword id="KW-1003">Cell membrane</keyword>
<keyword id="KW-0139">CF(1)</keyword>
<keyword id="KW-0375">Hydrogen ion transport</keyword>
<keyword id="KW-0406">Ion transport</keyword>
<keyword id="KW-0472">Membrane</keyword>
<keyword id="KW-1185">Reference proteome</keyword>
<keyword id="KW-0813">Transport</keyword>
<sequence length="121" mass="12998">MAELNVEIVAVDRKIWSGAGTFLFTRTTVGEIGILPNHIPLVAQLVDDAMVRVERDGDKDLRIAVDGGFMSVTDAGVSILAESAEFESEIDEAVARQDSESDDPRTAARGRARLRAVGAID</sequence>
<proteinExistence type="inferred from homology"/>
<comment type="function">
    <text evidence="1">Produces ATP from ADP in the presence of a proton gradient across the membrane.</text>
</comment>
<comment type="subunit">
    <text evidence="1">F-type ATPases have 2 components, CF(1) - the catalytic core - and CF(0) - the membrane proton channel. CF(1) has five subunits: alpha(3), beta(3), gamma(1), delta(1), epsilon(1). CF(0) has three main subunits: a, b and c.</text>
</comment>
<comment type="subcellular location">
    <subcellularLocation>
        <location evidence="1">Cell membrane</location>
        <topology evidence="1">Peripheral membrane protein</topology>
    </subcellularLocation>
</comment>
<comment type="similarity">
    <text evidence="1">Belongs to the ATPase epsilon chain family.</text>
</comment>
<accession>B2HQK1</accession>
<evidence type="ECO:0000255" key="1">
    <source>
        <dbReference type="HAMAP-Rule" id="MF_00530"/>
    </source>
</evidence>
<name>ATPE_MYCMM</name>
<reference key="1">
    <citation type="journal article" date="2008" name="Genome Res.">
        <title>Insights from the complete genome sequence of Mycobacterium marinum on the evolution of Mycobacterium tuberculosis.</title>
        <authorList>
            <person name="Stinear T.P."/>
            <person name="Seemann T."/>
            <person name="Harrison P.F."/>
            <person name="Jenkin G.A."/>
            <person name="Davies J.K."/>
            <person name="Johnson P.D."/>
            <person name="Abdellah Z."/>
            <person name="Arrowsmith C."/>
            <person name="Chillingworth T."/>
            <person name="Churcher C."/>
            <person name="Clarke K."/>
            <person name="Cronin A."/>
            <person name="Davis P."/>
            <person name="Goodhead I."/>
            <person name="Holroyd N."/>
            <person name="Jagels K."/>
            <person name="Lord A."/>
            <person name="Moule S."/>
            <person name="Mungall K."/>
            <person name="Norbertczak H."/>
            <person name="Quail M.A."/>
            <person name="Rabbinowitsch E."/>
            <person name="Walker D."/>
            <person name="White B."/>
            <person name="Whitehead S."/>
            <person name="Small P.L."/>
            <person name="Brosch R."/>
            <person name="Ramakrishnan L."/>
            <person name="Fischbach M.A."/>
            <person name="Parkhill J."/>
            <person name="Cole S.T."/>
        </authorList>
    </citation>
    <scope>NUCLEOTIDE SEQUENCE [LARGE SCALE GENOMIC DNA]</scope>
    <source>
        <strain>ATCC BAA-535 / M</strain>
    </source>
</reference>
<protein>
    <recommendedName>
        <fullName evidence="1">ATP synthase epsilon chain</fullName>
    </recommendedName>
    <alternativeName>
        <fullName evidence="1">ATP synthase F1 sector epsilon subunit</fullName>
    </alternativeName>
    <alternativeName>
        <fullName evidence="1">F-ATPase epsilon subunit</fullName>
    </alternativeName>
</protein>
<organism>
    <name type="scientific">Mycobacterium marinum (strain ATCC BAA-535 / M)</name>
    <dbReference type="NCBI Taxonomy" id="216594"/>
    <lineage>
        <taxon>Bacteria</taxon>
        <taxon>Bacillati</taxon>
        <taxon>Actinomycetota</taxon>
        <taxon>Actinomycetes</taxon>
        <taxon>Mycobacteriales</taxon>
        <taxon>Mycobacteriaceae</taxon>
        <taxon>Mycobacterium</taxon>
        <taxon>Mycobacterium ulcerans group</taxon>
    </lineage>
</organism>
<gene>
    <name evidence="1" type="primary">atpC</name>
    <name type="ordered locus">MMAR_4086</name>
</gene>
<feature type="chain" id="PRO_1000127871" description="ATP synthase epsilon chain">
    <location>
        <begin position="1"/>
        <end position="121"/>
    </location>
</feature>